<accession>B4MQL8</accession>
<comment type="function">
    <text evidence="2">RNA-binding component of the eukaryotic translation initiation factor 3 (eIF-3) complex, which is involved in protein synthesis of a specialized repertoire of mRNAs and, together with other initiation factors, stimulates binding of mRNA and methionyl-tRNAi to the 40S ribosome. The eIF-3 complex specifically targets and initiates translation of a subset of mRNAs involved in cell proliferation.</text>
</comment>
<comment type="subunit">
    <text evidence="1 2">Component of the eukaryotic translation initiation factor 3 (eIF-3) complex. The eIF-3 complex interacts with pix. Interacts with mxt (By similarity).</text>
</comment>
<comment type="subcellular location">
    <subcellularLocation>
        <location evidence="2">Cytoplasm</location>
    </subcellularLocation>
</comment>
<comment type="similarity">
    <text evidence="2">Belongs to the eIF-3 subunit B family.</text>
</comment>
<organism>
    <name type="scientific">Drosophila willistoni</name>
    <name type="common">Fruit fly</name>
    <dbReference type="NCBI Taxonomy" id="7260"/>
    <lineage>
        <taxon>Eukaryota</taxon>
        <taxon>Metazoa</taxon>
        <taxon>Ecdysozoa</taxon>
        <taxon>Arthropoda</taxon>
        <taxon>Hexapoda</taxon>
        <taxon>Insecta</taxon>
        <taxon>Pterygota</taxon>
        <taxon>Neoptera</taxon>
        <taxon>Endopterygota</taxon>
        <taxon>Diptera</taxon>
        <taxon>Brachycera</taxon>
        <taxon>Muscomorpha</taxon>
        <taxon>Ephydroidea</taxon>
        <taxon>Drosophilidae</taxon>
        <taxon>Drosophila</taxon>
        <taxon>Sophophora</taxon>
    </lineage>
</organism>
<name>EIF3B_DROWI</name>
<proteinExistence type="inferred from homology"/>
<sequence length="690" mass="80480">MAKKKSEEHSSADANDSDYQEEPNFDDPPNFVDNINDEDLLGDMLAQRPSEADGVESVVVVDNIPKVEPSRLEKLKSVILKVFSHCGEIVNVVYPVDDEGTTKGYAFMEYRHASQAEDAVKKLNNHRLDKNHTFAVNLFTDFQKYENIPEKWEPPTVQPFKIQNDLYNFINDPDAYDQYCVAAETAPNCVQVGFWQNTLPEPNELETRERFTDTFVKWSPLGTYVVTFHKPGVAIWGGSNFQKIQKFPHTGTQFVEFSPCENYLVTYGPTPTGQKIIIWDIRTGSEKRSFVADGMSVLSMFRWSHDDKFVARMGENSIHIYETPSFYLLDLKSIKIPGIRGFSWSPTDNVIAYWVEEQNQIPARVTLMEIPKKREIRNKNLFHVADCKLHWQKSGDYLCVKVDRYSKLKKDKKELDVKFLGMFYNFEIFHMREKEIPVDSVEIRELILAFAWEPIGNKFSIIHGELNSSNVSFYEVNKGVKPSLVKRLEKKSCTHLFWSPRGQFIVMANLTMGTFEFVDTTNDYIISASPDHFRASEVEWDPTGRYVVTGVSSWKVKEDTGFNMYTFQGRIIKRTILKNFVQFLWRPRPPTLLSEEKQKDIKKNLKKYYPAFEQKDRLRLTRASKELLEKRSQLRETFMEYRNKRIAEWKDQKSRRVMLRGHVDTDNLETEEVDEEIVEFLVKEEITLLE</sequence>
<gene>
    <name evidence="2" type="primary">eIF3b</name>
    <name evidence="2" type="synonym">eIF3-S9</name>
    <name type="ORF">GK21404</name>
</gene>
<feature type="chain" id="PRO_0000363804" description="Eukaryotic translation initiation factor 3 subunit B">
    <location>
        <begin position="1"/>
        <end position="690"/>
    </location>
</feature>
<feature type="domain" description="RRM" evidence="2">
    <location>
        <begin position="57"/>
        <end position="141"/>
    </location>
</feature>
<feature type="repeat" description="WD 1">
    <location>
        <begin position="207"/>
        <end position="246"/>
    </location>
</feature>
<feature type="repeat" description="WD 2">
    <location>
        <begin position="293"/>
        <end position="331"/>
    </location>
</feature>
<feature type="repeat" description="WD 3">
    <location>
        <begin position="334"/>
        <end position="369"/>
    </location>
</feature>
<feature type="repeat" description="WD 4">
    <location>
        <begin position="442"/>
        <end position="484"/>
    </location>
</feature>
<feature type="repeat" description="WD 5">
    <location>
        <begin position="530"/>
        <end position="575"/>
    </location>
</feature>
<feature type="region of interest" description="Disordered" evidence="3">
    <location>
        <begin position="1"/>
        <end position="33"/>
    </location>
</feature>
<feature type="coiled-coil region" evidence="2">
    <location>
        <begin position="614"/>
        <end position="645"/>
    </location>
</feature>
<feature type="compositionally biased region" description="Basic and acidic residues" evidence="3">
    <location>
        <begin position="1"/>
        <end position="11"/>
    </location>
</feature>
<feature type="compositionally biased region" description="Acidic residues" evidence="3">
    <location>
        <begin position="15"/>
        <end position="25"/>
    </location>
</feature>
<protein>
    <recommendedName>
        <fullName evidence="2">Eukaryotic translation initiation factor 3 subunit B</fullName>
        <shortName evidence="2">eIF3b</shortName>
    </recommendedName>
    <alternativeName>
        <fullName evidence="2">Eukaryotic translation initiation factor 3 subunit 9</fullName>
    </alternativeName>
</protein>
<dbReference type="EMBL" id="CH963849">
    <property type="protein sequence ID" value="EDW74407.1"/>
    <property type="molecule type" value="Genomic_DNA"/>
</dbReference>
<dbReference type="SMR" id="B4MQL8"/>
<dbReference type="STRING" id="7260.B4MQL8"/>
<dbReference type="EnsemblMetazoa" id="FBtr0252055">
    <property type="protein sequence ID" value="FBpp0250547"/>
    <property type="gene ID" value="FBgn0223396"/>
</dbReference>
<dbReference type="EnsemblMetazoa" id="XM_002063385.4">
    <property type="protein sequence ID" value="XP_002063421.1"/>
    <property type="gene ID" value="LOC6640577"/>
</dbReference>
<dbReference type="GeneID" id="6640577"/>
<dbReference type="KEGG" id="dwi:6640577"/>
<dbReference type="CTD" id="8662"/>
<dbReference type="eggNOG" id="KOG2314">
    <property type="taxonomic scope" value="Eukaryota"/>
</dbReference>
<dbReference type="HOGENOM" id="CLU_011152_1_0_1"/>
<dbReference type="OMA" id="LWGGPQF"/>
<dbReference type="OrthoDB" id="10250414at2759"/>
<dbReference type="PhylomeDB" id="B4MQL8"/>
<dbReference type="Proteomes" id="UP000007798">
    <property type="component" value="Unassembled WGS sequence"/>
</dbReference>
<dbReference type="GO" id="GO:0016282">
    <property type="term" value="C:eukaryotic 43S preinitiation complex"/>
    <property type="evidence" value="ECO:0007669"/>
    <property type="project" value="UniProtKB-UniRule"/>
</dbReference>
<dbReference type="GO" id="GO:0033290">
    <property type="term" value="C:eukaryotic 48S preinitiation complex"/>
    <property type="evidence" value="ECO:0007669"/>
    <property type="project" value="UniProtKB-UniRule"/>
</dbReference>
<dbReference type="GO" id="GO:0005852">
    <property type="term" value="C:eukaryotic translation initiation factor 3 complex"/>
    <property type="evidence" value="ECO:0000250"/>
    <property type="project" value="UniProtKB"/>
</dbReference>
<dbReference type="GO" id="GO:0003723">
    <property type="term" value="F:RNA binding"/>
    <property type="evidence" value="ECO:0007669"/>
    <property type="project" value="UniProtKB-UniRule"/>
</dbReference>
<dbReference type="GO" id="GO:0003743">
    <property type="term" value="F:translation initiation factor activity"/>
    <property type="evidence" value="ECO:0000250"/>
    <property type="project" value="UniProtKB"/>
</dbReference>
<dbReference type="GO" id="GO:0031369">
    <property type="term" value="F:translation initiation factor binding"/>
    <property type="evidence" value="ECO:0007669"/>
    <property type="project" value="InterPro"/>
</dbReference>
<dbReference type="GO" id="GO:0030707">
    <property type="term" value="P:follicle cell of egg chamber development"/>
    <property type="evidence" value="ECO:0007669"/>
    <property type="project" value="EnsemblMetazoa"/>
</dbReference>
<dbReference type="GO" id="GO:0001732">
    <property type="term" value="P:formation of cytoplasmic translation initiation complex"/>
    <property type="evidence" value="ECO:0007669"/>
    <property type="project" value="UniProtKB-UniRule"/>
</dbReference>
<dbReference type="GO" id="GO:0006446">
    <property type="term" value="P:regulation of translational initiation"/>
    <property type="evidence" value="ECO:0000250"/>
    <property type="project" value="UniProtKB"/>
</dbReference>
<dbReference type="CDD" id="cd12278">
    <property type="entry name" value="RRM_eIF3B"/>
    <property type="match status" value="1"/>
</dbReference>
<dbReference type="FunFam" id="2.130.10.10:FF:000884">
    <property type="entry name" value="Eukaryotic translation initiation factor 3 subunit B"/>
    <property type="match status" value="1"/>
</dbReference>
<dbReference type="FunFam" id="3.30.70.330:FF:000607">
    <property type="entry name" value="Eukaryotic translation initiation factor 3 subunit B"/>
    <property type="match status" value="1"/>
</dbReference>
<dbReference type="Gene3D" id="3.30.70.330">
    <property type="match status" value="1"/>
</dbReference>
<dbReference type="Gene3D" id="2.130.10.10">
    <property type="entry name" value="YVTN repeat-like/Quinoprotein amine dehydrogenase"/>
    <property type="match status" value="1"/>
</dbReference>
<dbReference type="HAMAP" id="MF_03001">
    <property type="entry name" value="eIF3b"/>
    <property type="match status" value="1"/>
</dbReference>
<dbReference type="InterPro" id="IPR011400">
    <property type="entry name" value="EIF3B"/>
</dbReference>
<dbReference type="InterPro" id="IPR034363">
    <property type="entry name" value="eIF3B_RRM"/>
</dbReference>
<dbReference type="InterPro" id="IPR012677">
    <property type="entry name" value="Nucleotide-bd_a/b_plait_sf"/>
</dbReference>
<dbReference type="InterPro" id="IPR035979">
    <property type="entry name" value="RBD_domain_sf"/>
</dbReference>
<dbReference type="InterPro" id="IPR000504">
    <property type="entry name" value="RRM_dom"/>
</dbReference>
<dbReference type="InterPro" id="IPR013979">
    <property type="entry name" value="TIF_beta_prop-like"/>
</dbReference>
<dbReference type="InterPro" id="IPR015943">
    <property type="entry name" value="WD40/YVTN_repeat-like_dom_sf"/>
</dbReference>
<dbReference type="PANTHER" id="PTHR14068">
    <property type="entry name" value="EUKARYOTIC TRANSLATION INITIATION FACTOR 3 EIF3 -RELATED"/>
    <property type="match status" value="1"/>
</dbReference>
<dbReference type="PANTHER" id="PTHR14068:SF0">
    <property type="entry name" value="EUKARYOTIC TRANSLATION INITIATION FACTOR 3 SUBUNIT B"/>
    <property type="match status" value="1"/>
</dbReference>
<dbReference type="Pfam" id="PF08662">
    <property type="entry name" value="eIF2A"/>
    <property type="match status" value="1"/>
</dbReference>
<dbReference type="Pfam" id="PF00076">
    <property type="entry name" value="RRM_1"/>
    <property type="match status" value="1"/>
</dbReference>
<dbReference type="PIRSF" id="PIRSF036424">
    <property type="entry name" value="eIF3b"/>
    <property type="match status" value="1"/>
</dbReference>
<dbReference type="SMART" id="SM00360">
    <property type="entry name" value="RRM"/>
    <property type="match status" value="1"/>
</dbReference>
<dbReference type="SUPFAM" id="SSF54928">
    <property type="entry name" value="RNA-binding domain, RBD"/>
    <property type="match status" value="1"/>
</dbReference>
<dbReference type="SUPFAM" id="SSF69322">
    <property type="entry name" value="Tricorn protease domain 2"/>
    <property type="match status" value="1"/>
</dbReference>
<dbReference type="PROSITE" id="PS50102">
    <property type="entry name" value="RRM"/>
    <property type="match status" value="1"/>
</dbReference>
<keyword id="KW-0175">Coiled coil</keyword>
<keyword id="KW-0963">Cytoplasm</keyword>
<keyword id="KW-0396">Initiation factor</keyword>
<keyword id="KW-0648">Protein biosynthesis</keyword>
<keyword id="KW-1185">Reference proteome</keyword>
<keyword id="KW-0677">Repeat</keyword>
<keyword id="KW-0694">RNA-binding</keyword>
<keyword id="KW-0853">WD repeat</keyword>
<evidence type="ECO:0000250" key="1">
    <source>
        <dbReference type="UniProtKB" id="Q0E940"/>
    </source>
</evidence>
<evidence type="ECO:0000255" key="2">
    <source>
        <dbReference type="HAMAP-Rule" id="MF_03001"/>
    </source>
</evidence>
<evidence type="ECO:0000256" key="3">
    <source>
        <dbReference type="SAM" id="MobiDB-lite"/>
    </source>
</evidence>
<reference key="1">
    <citation type="journal article" date="2007" name="Nature">
        <title>Evolution of genes and genomes on the Drosophila phylogeny.</title>
        <authorList>
            <consortium name="Drosophila 12 genomes consortium"/>
        </authorList>
    </citation>
    <scope>NUCLEOTIDE SEQUENCE [LARGE SCALE GENOMIC DNA]</scope>
    <source>
        <strain>Tucson 14030-0811.24</strain>
    </source>
</reference>